<name>TSAD_BRUO2</name>
<gene>
    <name evidence="1" type="primary">tsaD</name>
    <name type="synonym">gcp</name>
    <name type="ordered locus">BOV_1816</name>
</gene>
<protein>
    <recommendedName>
        <fullName evidence="1">tRNA N6-adenosine threonylcarbamoyltransferase</fullName>
        <ecNumber evidence="1">2.3.1.234</ecNumber>
    </recommendedName>
    <alternativeName>
        <fullName evidence="1">N6-L-threonylcarbamoyladenine synthase</fullName>
        <shortName evidence="1">t(6)A synthase</shortName>
    </alternativeName>
    <alternativeName>
        <fullName evidence="1">t(6)A37 threonylcarbamoyladenosine biosynthesis protein TsaD</fullName>
    </alternativeName>
    <alternativeName>
        <fullName evidence="1">tRNA threonylcarbamoyladenosine biosynthesis protein TsaD</fullName>
    </alternativeName>
</protein>
<reference key="1">
    <citation type="journal article" date="2009" name="PLoS ONE">
        <title>Genome degradation in Brucella ovis corresponds with narrowing of its host range and tissue tropism.</title>
        <authorList>
            <person name="Tsolis R.M."/>
            <person name="Seshadri R."/>
            <person name="Santos R.L."/>
            <person name="Sangari F.J."/>
            <person name="Lobo J.M."/>
            <person name="de Jong M.F."/>
            <person name="Ren Q."/>
            <person name="Myers G."/>
            <person name="Brinkac L.M."/>
            <person name="Nelson W.C."/>
            <person name="Deboy R.T."/>
            <person name="Angiuoli S."/>
            <person name="Khouri H."/>
            <person name="Dimitrov G."/>
            <person name="Robinson J.R."/>
            <person name="Mulligan S."/>
            <person name="Walker R.L."/>
            <person name="Elzer P.E."/>
            <person name="Hassan K.A."/>
            <person name="Paulsen I.T."/>
        </authorList>
    </citation>
    <scope>NUCLEOTIDE SEQUENCE [LARGE SCALE GENOMIC DNA]</scope>
    <source>
        <strain>ATCC 25840 / 63/290 / NCTC 10512</strain>
    </source>
</reference>
<accession>A5VSL6</accession>
<dbReference type="EC" id="2.3.1.234" evidence="1"/>
<dbReference type="EMBL" id="CP000708">
    <property type="protein sequence ID" value="ABQ61965.1"/>
    <property type="molecule type" value="Genomic_DNA"/>
</dbReference>
<dbReference type="RefSeq" id="WP_006014215.1">
    <property type="nucleotide sequence ID" value="NC_009505.1"/>
</dbReference>
<dbReference type="SMR" id="A5VSL6"/>
<dbReference type="GeneID" id="45125163"/>
<dbReference type="KEGG" id="bov:BOV_1816"/>
<dbReference type="HOGENOM" id="CLU_023208_0_2_5"/>
<dbReference type="PhylomeDB" id="A5VSL6"/>
<dbReference type="Proteomes" id="UP000006383">
    <property type="component" value="Chromosome I"/>
</dbReference>
<dbReference type="GO" id="GO:0005737">
    <property type="term" value="C:cytoplasm"/>
    <property type="evidence" value="ECO:0007669"/>
    <property type="project" value="UniProtKB-SubCell"/>
</dbReference>
<dbReference type="GO" id="GO:0005506">
    <property type="term" value="F:iron ion binding"/>
    <property type="evidence" value="ECO:0007669"/>
    <property type="project" value="UniProtKB-UniRule"/>
</dbReference>
<dbReference type="GO" id="GO:0061711">
    <property type="term" value="F:N(6)-L-threonylcarbamoyladenine synthase activity"/>
    <property type="evidence" value="ECO:0007669"/>
    <property type="project" value="UniProtKB-EC"/>
</dbReference>
<dbReference type="GO" id="GO:0002949">
    <property type="term" value="P:tRNA threonylcarbamoyladenosine modification"/>
    <property type="evidence" value="ECO:0007669"/>
    <property type="project" value="UniProtKB-UniRule"/>
</dbReference>
<dbReference type="CDD" id="cd24133">
    <property type="entry name" value="ASKHA_NBD_TsaD_bac"/>
    <property type="match status" value="1"/>
</dbReference>
<dbReference type="FunFam" id="3.30.420.40:FF:000040">
    <property type="entry name" value="tRNA N6-adenosine threonylcarbamoyltransferase"/>
    <property type="match status" value="1"/>
</dbReference>
<dbReference type="Gene3D" id="3.30.420.40">
    <property type="match status" value="2"/>
</dbReference>
<dbReference type="HAMAP" id="MF_01445">
    <property type="entry name" value="TsaD"/>
    <property type="match status" value="1"/>
</dbReference>
<dbReference type="InterPro" id="IPR043129">
    <property type="entry name" value="ATPase_NBD"/>
</dbReference>
<dbReference type="InterPro" id="IPR000905">
    <property type="entry name" value="Gcp-like_dom"/>
</dbReference>
<dbReference type="InterPro" id="IPR017861">
    <property type="entry name" value="KAE1/TsaD"/>
</dbReference>
<dbReference type="InterPro" id="IPR022450">
    <property type="entry name" value="TsaD"/>
</dbReference>
<dbReference type="NCBIfam" id="TIGR00329">
    <property type="entry name" value="gcp_kae1"/>
    <property type="match status" value="1"/>
</dbReference>
<dbReference type="NCBIfam" id="TIGR03723">
    <property type="entry name" value="T6A_TsaD_YgjD"/>
    <property type="match status" value="1"/>
</dbReference>
<dbReference type="PANTHER" id="PTHR11735">
    <property type="entry name" value="TRNA N6-ADENOSINE THREONYLCARBAMOYLTRANSFERASE"/>
    <property type="match status" value="1"/>
</dbReference>
<dbReference type="PANTHER" id="PTHR11735:SF6">
    <property type="entry name" value="TRNA N6-ADENOSINE THREONYLCARBAMOYLTRANSFERASE, MITOCHONDRIAL"/>
    <property type="match status" value="1"/>
</dbReference>
<dbReference type="Pfam" id="PF00814">
    <property type="entry name" value="TsaD"/>
    <property type="match status" value="1"/>
</dbReference>
<dbReference type="PRINTS" id="PR00789">
    <property type="entry name" value="OSIALOPTASE"/>
</dbReference>
<dbReference type="SUPFAM" id="SSF53067">
    <property type="entry name" value="Actin-like ATPase domain"/>
    <property type="match status" value="2"/>
</dbReference>
<comment type="function">
    <text evidence="1">Required for the formation of a threonylcarbamoyl group on adenosine at position 37 (t(6)A37) in tRNAs that read codons beginning with adenine. Is involved in the transfer of the threonylcarbamoyl moiety of threonylcarbamoyl-AMP (TC-AMP) to the N6 group of A37, together with TsaE and TsaB. TsaD likely plays a direct catalytic role in this reaction.</text>
</comment>
<comment type="catalytic activity">
    <reaction evidence="1">
        <text>L-threonylcarbamoyladenylate + adenosine(37) in tRNA = N(6)-L-threonylcarbamoyladenosine(37) in tRNA + AMP + H(+)</text>
        <dbReference type="Rhea" id="RHEA:37059"/>
        <dbReference type="Rhea" id="RHEA-COMP:10162"/>
        <dbReference type="Rhea" id="RHEA-COMP:10163"/>
        <dbReference type="ChEBI" id="CHEBI:15378"/>
        <dbReference type="ChEBI" id="CHEBI:73682"/>
        <dbReference type="ChEBI" id="CHEBI:74411"/>
        <dbReference type="ChEBI" id="CHEBI:74418"/>
        <dbReference type="ChEBI" id="CHEBI:456215"/>
        <dbReference type="EC" id="2.3.1.234"/>
    </reaction>
</comment>
<comment type="cofactor">
    <cofactor evidence="1">
        <name>Fe(2+)</name>
        <dbReference type="ChEBI" id="CHEBI:29033"/>
    </cofactor>
    <text evidence="1">Binds 1 Fe(2+) ion per subunit.</text>
</comment>
<comment type="subcellular location">
    <subcellularLocation>
        <location evidence="1">Cytoplasm</location>
    </subcellularLocation>
</comment>
<comment type="similarity">
    <text evidence="1">Belongs to the KAE1 / TsaD family.</text>
</comment>
<proteinExistence type="inferred from homology"/>
<organism>
    <name type="scientific">Brucella ovis (strain ATCC 25840 / 63/290 / NCTC 10512)</name>
    <dbReference type="NCBI Taxonomy" id="444178"/>
    <lineage>
        <taxon>Bacteria</taxon>
        <taxon>Pseudomonadati</taxon>
        <taxon>Pseudomonadota</taxon>
        <taxon>Alphaproteobacteria</taxon>
        <taxon>Hyphomicrobiales</taxon>
        <taxon>Brucellaceae</taxon>
        <taxon>Brucella/Ochrobactrum group</taxon>
        <taxon>Brucella</taxon>
    </lineage>
</organism>
<sequence>MRVLGIETSCDETAAAIVERDDMGEGRILSNVVLSQIAEHEPYGGVVPEIAARAHAEALDRLVDRALNDAGLKLYEVDAVAATAGPGLIGGLIVGLMTAKALAMAAQKPFYAVNHLEGHALTARLTDGLPFPYLLLLVSGGHTQMVLVRGIGDYERLGTTIDDALGEAFDKTAKLLGLPYPGGPAVERMALQGDQKRFALPRPLKGEARLDFSFSGLKTAVRQTATELVPLTDQDVTDICASFQAAVADTLSDRVGRSLERFKTEFPDCATPSLVVAGGVAANKTLRAALENLCTRHGFAFIAPPLNLCTDNAAMIAWAGAERAATQAPDSLDIAPRSRWPLDEKSAPVFGTGRRGAKA</sequence>
<evidence type="ECO:0000255" key="1">
    <source>
        <dbReference type="HAMAP-Rule" id="MF_01445"/>
    </source>
</evidence>
<evidence type="ECO:0000256" key="2">
    <source>
        <dbReference type="SAM" id="MobiDB-lite"/>
    </source>
</evidence>
<feature type="chain" id="PRO_0000303296" description="tRNA N6-adenosine threonylcarbamoyltransferase">
    <location>
        <begin position="1"/>
        <end position="359"/>
    </location>
</feature>
<feature type="region of interest" description="Disordered" evidence="2">
    <location>
        <begin position="328"/>
        <end position="359"/>
    </location>
</feature>
<feature type="binding site" evidence="1">
    <location>
        <position position="115"/>
    </location>
    <ligand>
        <name>Fe cation</name>
        <dbReference type="ChEBI" id="CHEBI:24875"/>
    </ligand>
</feature>
<feature type="binding site" evidence="1">
    <location>
        <position position="119"/>
    </location>
    <ligand>
        <name>Fe cation</name>
        <dbReference type="ChEBI" id="CHEBI:24875"/>
    </ligand>
</feature>
<feature type="binding site" evidence="1">
    <location>
        <begin position="137"/>
        <end position="141"/>
    </location>
    <ligand>
        <name>substrate</name>
    </ligand>
</feature>
<feature type="binding site" evidence="1">
    <location>
        <position position="170"/>
    </location>
    <ligand>
        <name>substrate</name>
    </ligand>
</feature>
<feature type="binding site" evidence="1">
    <location>
        <position position="183"/>
    </location>
    <ligand>
        <name>substrate</name>
    </ligand>
</feature>
<feature type="binding site" evidence="1">
    <location>
        <position position="283"/>
    </location>
    <ligand>
        <name>substrate</name>
    </ligand>
</feature>
<feature type="binding site" evidence="1">
    <location>
        <position position="311"/>
    </location>
    <ligand>
        <name>Fe cation</name>
        <dbReference type="ChEBI" id="CHEBI:24875"/>
    </ligand>
</feature>
<keyword id="KW-0012">Acyltransferase</keyword>
<keyword id="KW-0963">Cytoplasm</keyword>
<keyword id="KW-0408">Iron</keyword>
<keyword id="KW-0479">Metal-binding</keyword>
<keyword id="KW-0808">Transferase</keyword>
<keyword id="KW-0819">tRNA processing</keyword>